<comment type="similarity">
    <text evidence="1">Belongs to the bacterial ribosomal protein bL36 family.</text>
</comment>
<feature type="chain" id="PRO_1000003415" description="Large ribosomal subunit protein bL36">
    <location>
        <begin position="1"/>
        <end position="37"/>
    </location>
</feature>
<dbReference type="EMBL" id="CP000753">
    <property type="protein sequence ID" value="ABS06388.1"/>
    <property type="molecule type" value="Genomic_DNA"/>
</dbReference>
<dbReference type="RefSeq" id="WP_006083579.1">
    <property type="nucleotide sequence ID" value="NC_009665.1"/>
</dbReference>
<dbReference type="SMR" id="A6WHU9"/>
<dbReference type="GeneID" id="94726207"/>
<dbReference type="KEGG" id="sbm:Shew185_0217"/>
<dbReference type="HOGENOM" id="CLU_135723_6_2_6"/>
<dbReference type="GO" id="GO:0005737">
    <property type="term" value="C:cytoplasm"/>
    <property type="evidence" value="ECO:0007669"/>
    <property type="project" value="UniProtKB-ARBA"/>
</dbReference>
<dbReference type="GO" id="GO:1990904">
    <property type="term" value="C:ribonucleoprotein complex"/>
    <property type="evidence" value="ECO:0007669"/>
    <property type="project" value="UniProtKB-KW"/>
</dbReference>
<dbReference type="GO" id="GO:0005840">
    <property type="term" value="C:ribosome"/>
    <property type="evidence" value="ECO:0007669"/>
    <property type="project" value="UniProtKB-KW"/>
</dbReference>
<dbReference type="GO" id="GO:0003735">
    <property type="term" value="F:structural constituent of ribosome"/>
    <property type="evidence" value="ECO:0007669"/>
    <property type="project" value="InterPro"/>
</dbReference>
<dbReference type="GO" id="GO:0006412">
    <property type="term" value="P:translation"/>
    <property type="evidence" value="ECO:0007669"/>
    <property type="project" value="UniProtKB-UniRule"/>
</dbReference>
<dbReference type="HAMAP" id="MF_00251">
    <property type="entry name" value="Ribosomal_bL36"/>
    <property type="match status" value="1"/>
</dbReference>
<dbReference type="InterPro" id="IPR000473">
    <property type="entry name" value="Ribosomal_bL36"/>
</dbReference>
<dbReference type="InterPro" id="IPR035977">
    <property type="entry name" value="Ribosomal_bL36_sp"/>
</dbReference>
<dbReference type="NCBIfam" id="TIGR01022">
    <property type="entry name" value="rpmJ_bact"/>
    <property type="match status" value="1"/>
</dbReference>
<dbReference type="PANTHER" id="PTHR42888">
    <property type="entry name" value="50S RIBOSOMAL PROTEIN L36, CHLOROPLASTIC"/>
    <property type="match status" value="1"/>
</dbReference>
<dbReference type="PANTHER" id="PTHR42888:SF1">
    <property type="entry name" value="LARGE RIBOSOMAL SUBUNIT PROTEIN BL36C"/>
    <property type="match status" value="1"/>
</dbReference>
<dbReference type="Pfam" id="PF00444">
    <property type="entry name" value="Ribosomal_L36"/>
    <property type="match status" value="1"/>
</dbReference>
<dbReference type="SUPFAM" id="SSF57840">
    <property type="entry name" value="Ribosomal protein L36"/>
    <property type="match status" value="1"/>
</dbReference>
<dbReference type="PROSITE" id="PS00828">
    <property type="entry name" value="RIBOSOMAL_L36"/>
    <property type="match status" value="1"/>
</dbReference>
<gene>
    <name evidence="1" type="primary">rpmJ</name>
    <name type="ordered locus">Shew185_0217</name>
</gene>
<accession>A6WHU9</accession>
<organism>
    <name type="scientific">Shewanella baltica (strain OS185)</name>
    <dbReference type="NCBI Taxonomy" id="402882"/>
    <lineage>
        <taxon>Bacteria</taxon>
        <taxon>Pseudomonadati</taxon>
        <taxon>Pseudomonadota</taxon>
        <taxon>Gammaproteobacteria</taxon>
        <taxon>Alteromonadales</taxon>
        <taxon>Shewanellaceae</taxon>
        <taxon>Shewanella</taxon>
    </lineage>
</organism>
<evidence type="ECO:0000255" key="1">
    <source>
        <dbReference type="HAMAP-Rule" id="MF_00251"/>
    </source>
</evidence>
<evidence type="ECO:0000305" key="2"/>
<sequence length="37" mass="4263">MKVRASVKKICRNCKIVKRSGVVRVICVEPKHKQRQG</sequence>
<name>RL36_SHEB8</name>
<reference key="1">
    <citation type="submission" date="2007-07" db="EMBL/GenBank/DDBJ databases">
        <title>Complete sequence of chromosome of Shewanella baltica OS185.</title>
        <authorList>
            <consortium name="US DOE Joint Genome Institute"/>
            <person name="Copeland A."/>
            <person name="Lucas S."/>
            <person name="Lapidus A."/>
            <person name="Barry K."/>
            <person name="Glavina del Rio T."/>
            <person name="Dalin E."/>
            <person name="Tice H."/>
            <person name="Pitluck S."/>
            <person name="Sims D."/>
            <person name="Brettin T."/>
            <person name="Bruce D."/>
            <person name="Detter J.C."/>
            <person name="Han C."/>
            <person name="Schmutz J."/>
            <person name="Larimer F."/>
            <person name="Land M."/>
            <person name="Hauser L."/>
            <person name="Kyrpides N."/>
            <person name="Mikhailova N."/>
            <person name="Brettar I."/>
            <person name="Rodrigues J."/>
            <person name="Konstantinidis K."/>
            <person name="Tiedje J."/>
            <person name="Richardson P."/>
        </authorList>
    </citation>
    <scope>NUCLEOTIDE SEQUENCE [LARGE SCALE GENOMIC DNA]</scope>
    <source>
        <strain>OS185</strain>
    </source>
</reference>
<keyword id="KW-0687">Ribonucleoprotein</keyword>
<keyword id="KW-0689">Ribosomal protein</keyword>
<protein>
    <recommendedName>
        <fullName evidence="1">Large ribosomal subunit protein bL36</fullName>
    </recommendedName>
    <alternativeName>
        <fullName evidence="2">50S ribosomal protein L36</fullName>
    </alternativeName>
</protein>
<proteinExistence type="inferred from homology"/>